<reference key="1">
    <citation type="journal article" date="2002" name="Proc. Natl. Acad. Sci. U.S.A.">
        <title>The complete genome of hyperthermophile Methanopyrus kandleri AV19 and monophyly of archaeal methanogens.</title>
        <authorList>
            <person name="Slesarev A.I."/>
            <person name="Mezhevaya K.V."/>
            <person name="Makarova K.S."/>
            <person name="Polushin N.N."/>
            <person name="Shcherbinina O.V."/>
            <person name="Shakhova V.V."/>
            <person name="Belova G.I."/>
            <person name="Aravind L."/>
            <person name="Natale D.A."/>
            <person name="Rogozin I.B."/>
            <person name="Tatusov R.L."/>
            <person name="Wolf Y.I."/>
            <person name="Stetter K.O."/>
            <person name="Malykh A.G."/>
            <person name="Koonin E.V."/>
            <person name="Kozyavkin S.A."/>
        </authorList>
    </citation>
    <scope>NUCLEOTIDE SEQUENCE [LARGE SCALE GENOMIC DNA]</scope>
    <source>
        <strain>AV19 / DSM 6324 / JCM 9639 / NBRC 100938</strain>
    </source>
</reference>
<gene>
    <name type="ordered locus">MK0021</name>
</gene>
<name>MTIP_METKA</name>
<protein>
    <recommendedName>
        <fullName evidence="1">Probable S-methyl-5'-thioinosine phosphorylase</fullName>
        <ecNumber evidence="1">2.4.2.44</ecNumber>
    </recommendedName>
    <alternativeName>
        <fullName evidence="1">5'-methylthioinosine phosphorylase</fullName>
        <shortName evidence="1">MTI phosphorylase</shortName>
        <shortName evidence="1">MTIP</shortName>
    </alternativeName>
</protein>
<sequence>MTEVGVIGGTGFQPGLPERRRTVFTPYGTVRVDITRVGDHRVYFINRHGKGHDLPPHRINYRAIVWAMRELGVKRILATNSVGVINSDEYEPGDIVLPVDFLDFTKRRPTTFYDEKVVHVDVTEPYCPELREALLKAADDLGYTVKEGAVYVATEGPRFETPAEIRAFRKLGGDIVGMTGFPEVVLARELEICYASVCLCTNYAAGIDDRRRTIDEVFELVEELRPKAVELIERCIEYIPPKRSCPCSQALEGAEV</sequence>
<accession>Q8TZB4</accession>
<comment type="function">
    <text evidence="1">Catalyzes the reversible phosphorylation of S-methyl-5'-thioinosine (MTI) to hypoxanthine and 5-methylthioribose-1-phosphate. Involved in the breakdown of S-methyl-5'-thioadenosine (MTA), a major by-product of polyamine biosynthesis. Catabolism of (MTA) occurs via deamination to MTI and phosphorolysis to hypoxanthine.</text>
</comment>
<comment type="catalytic activity">
    <reaction evidence="1">
        <text>S-methyl-5'-thioinosine + phosphate = 5-(methylsulfanyl)-alpha-D-ribose 1-phosphate + hypoxanthine</text>
        <dbReference type="Rhea" id="RHEA:30643"/>
        <dbReference type="ChEBI" id="CHEBI:17368"/>
        <dbReference type="ChEBI" id="CHEBI:43474"/>
        <dbReference type="ChEBI" id="CHEBI:48595"/>
        <dbReference type="ChEBI" id="CHEBI:58533"/>
        <dbReference type="EC" id="2.4.2.44"/>
    </reaction>
</comment>
<comment type="pathway">
    <text evidence="1">Purine metabolism; purine nucleoside salvage.</text>
</comment>
<comment type="subunit">
    <text evidence="1">Homotrimer.</text>
</comment>
<comment type="miscellaneous">
    <text evidence="1">Although this enzyme belongs to the family of MTA phosphorylases based on sequence homology, it has been shown that conserved amino acid substitutions in the substrate binding pocket convert the substrate specificity of this enzyme from 6-aminopurines to 6-oxopurines.</text>
</comment>
<comment type="similarity">
    <text evidence="1">Belongs to the PNP/MTAP phosphorylase family. MTAP subfamily.</text>
</comment>
<evidence type="ECO:0000255" key="1">
    <source>
        <dbReference type="HAMAP-Rule" id="MF_01963"/>
    </source>
</evidence>
<dbReference type="EC" id="2.4.2.44" evidence="1"/>
<dbReference type="EMBL" id="AE009439">
    <property type="protein sequence ID" value="AAM01238.1"/>
    <property type="molecule type" value="Genomic_DNA"/>
</dbReference>
<dbReference type="RefSeq" id="WP_011018393.1">
    <property type="nucleotide sequence ID" value="NC_003551.1"/>
</dbReference>
<dbReference type="SMR" id="Q8TZB4"/>
<dbReference type="FunCoup" id="Q8TZB4">
    <property type="interactions" value="133"/>
</dbReference>
<dbReference type="STRING" id="190192.MK0021"/>
<dbReference type="PaxDb" id="190192-MK0021"/>
<dbReference type="EnsemblBacteria" id="AAM01238">
    <property type="protein sequence ID" value="AAM01238"/>
    <property type="gene ID" value="MK0021"/>
</dbReference>
<dbReference type="GeneID" id="1477323"/>
<dbReference type="KEGG" id="mka:MK0021"/>
<dbReference type="PATRIC" id="fig|190192.8.peg.21"/>
<dbReference type="HOGENOM" id="CLU_054456_0_2_2"/>
<dbReference type="InParanoid" id="Q8TZB4"/>
<dbReference type="OrthoDB" id="7681at2157"/>
<dbReference type="UniPathway" id="UPA00606"/>
<dbReference type="Proteomes" id="UP000001826">
    <property type="component" value="Chromosome"/>
</dbReference>
<dbReference type="GO" id="GO:0005829">
    <property type="term" value="C:cytosol"/>
    <property type="evidence" value="ECO:0007669"/>
    <property type="project" value="TreeGrafter"/>
</dbReference>
<dbReference type="GO" id="GO:0017061">
    <property type="term" value="F:S-methyl-5-thioadenosine phosphorylase activity"/>
    <property type="evidence" value="ECO:0007669"/>
    <property type="project" value="InterPro"/>
</dbReference>
<dbReference type="GO" id="GO:0019509">
    <property type="term" value="P:L-methionine salvage from methylthioadenosine"/>
    <property type="evidence" value="ECO:0007669"/>
    <property type="project" value="TreeGrafter"/>
</dbReference>
<dbReference type="GO" id="GO:0006166">
    <property type="term" value="P:purine ribonucleoside salvage"/>
    <property type="evidence" value="ECO:0007669"/>
    <property type="project" value="UniProtKB-UniRule"/>
</dbReference>
<dbReference type="CDD" id="cd09010">
    <property type="entry name" value="MTAP_SsMTAPII_like_MTIP"/>
    <property type="match status" value="1"/>
</dbReference>
<dbReference type="Gene3D" id="3.40.50.1580">
    <property type="entry name" value="Nucleoside phosphorylase domain"/>
    <property type="match status" value="1"/>
</dbReference>
<dbReference type="HAMAP" id="MF_01963">
    <property type="entry name" value="MTAP"/>
    <property type="match status" value="1"/>
</dbReference>
<dbReference type="InterPro" id="IPR010044">
    <property type="entry name" value="MTAP"/>
</dbReference>
<dbReference type="InterPro" id="IPR000845">
    <property type="entry name" value="Nucleoside_phosphorylase_d"/>
</dbReference>
<dbReference type="InterPro" id="IPR035994">
    <property type="entry name" value="Nucleoside_phosphorylase_sf"/>
</dbReference>
<dbReference type="NCBIfam" id="TIGR01694">
    <property type="entry name" value="MTAP"/>
    <property type="match status" value="1"/>
</dbReference>
<dbReference type="NCBIfam" id="NF006599">
    <property type="entry name" value="PRK09136.1"/>
    <property type="match status" value="1"/>
</dbReference>
<dbReference type="PANTHER" id="PTHR42679">
    <property type="entry name" value="S-METHYL-5'-THIOADENOSINE PHOSPHORYLASE"/>
    <property type="match status" value="1"/>
</dbReference>
<dbReference type="PANTHER" id="PTHR42679:SF2">
    <property type="entry name" value="S-METHYL-5'-THIOADENOSINE PHOSPHORYLASE"/>
    <property type="match status" value="1"/>
</dbReference>
<dbReference type="Pfam" id="PF01048">
    <property type="entry name" value="PNP_UDP_1"/>
    <property type="match status" value="1"/>
</dbReference>
<dbReference type="SUPFAM" id="SSF53167">
    <property type="entry name" value="Purine and uridine phosphorylases"/>
    <property type="match status" value="1"/>
</dbReference>
<proteinExistence type="inferred from homology"/>
<feature type="chain" id="PRO_0000415142" description="Probable S-methyl-5'-thioinosine phosphorylase">
    <location>
        <begin position="1"/>
        <end position="256"/>
    </location>
</feature>
<feature type="binding site" evidence="1">
    <location>
        <position position="10"/>
    </location>
    <ligand>
        <name>phosphate</name>
        <dbReference type="ChEBI" id="CHEBI:43474"/>
    </ligand>
</feature>
<feature type="binding site" evidence="1">
    <location>
        <begin position="47"/>
        <end position="48"/>
    </location>
    <ligand>
        <name>phosphate</name>
        <dbReference type="ChEBI" id="CHEBI:43474"/>
    </ligand>
</feature>
<feature type="binding site" evidence="1">
    <location>
        <position position="178"/>
    </location>
    <ligand>
        <name>substrate</name>
    </ligand>
</feature>
<feature type="binding site" evidence="1">
    <location>
        <position position="179"/>
    </location>
    <ligand>
        <name>phosphate</name>
        <dbReference type="ChEBI" id="CHEBI:43474"/>
    </ligand>
</feature>
<feature type="binding site" evidence="1">
    <location>
        <begin position="202"/>
        <end position="204"/>
    </location>
    <ligand>
        <name>substrate</name>
    </ligand>
</feature>
<feature type="site" description="Important for substrate specificity" evidence="1">
    <location>
        <position position="160"/>
    </location>
</feature>
<feature type="site" description="Important for substrate specificity" evidence="1">
    <location>
        <position position="214"/>
    </location>
</feature>
<organism>
    <name type="scientific">Methanopyrus kandleri (strain AV19 / DSM 6324 / JCM 9639 / NBRC 100938)</name>
    <dbReference type="NCBI Taxonomy" id="190192"/>
    <lineage>
        <taxon>Archaea</taxon>
        <taxon>Methanobacteriati</taxon>
        <taxon>Methanobacteriota</taxon>
        <taxon>Methanomada group</taxon>
        <taxon>Methanopyri</taxon>
        <taxon>Methanopyrales</taxon>
        <taxon>Methanopyraceae</taxon>
        <taxon>Methanopyrus</taxon>
    </lineage>
</organism>
<keyword id="KW-0328">Glycosyltransferase</keyword>
<keyword id="KW-0660">Purine salvage</keyword>
<keyword id="KW-1185">Reference proteome</keyword>
<keyword id="KW-0808">Transferase</keyword>